<proteinExistence type="evidence at protein level"/>
<comment type="function">
    <text evidence="1">Ubiquitin-like protein which can be covalently attached to target lysines as a monomer. Does not seem to be involved in protein degradation and may function as an antagonist of ubiquitin in the degradation process (By similarity).</text>
</comment>
<comment type="subunit">
    <text evidence="1">Interacts with SAE2, SCE1 and SIZ1. Covalently attached to a number of proteins (By similarity).</text>
</comment>
<comment type="subcellular location">
    <subcellularLocation>
        <location evidence="1">Nucleus</location>
    </subcellularLocation>
    <subcellularLocation>
        <location evidence="1">Cytoplasm</location>
    </subcellularLocation>
</comment>
<comment type="similarity">
    <text evidence="4">Belongs to the ubiquitin family. SUMO subfamily.</text>
</comment>
<organism>
    <name type="scientific">Oryza sativa subsp. japonica</name>
    <name type="common">Rice</name>
    <dbReference type="NCBI Taxonomy" id="39947"/>
    <lineage>
        <taxon>Eukaryota</taxon>
        <taxon>Viridiplantae</taxon>
        <taxon>Streptophyta</taxon>
        <taxon>Embryophyta</taxon>
        <taxon>Tracheophyta</taxon>
        <taxon>Spermatophyta</taxon>
        <taxon>Magnoliopsida</taxon>
        <taxon>Liliopsida</taxon>
        <taxon>Poales</taxon>
        <taxon>Poaceae</taxon>
        <taxon>BOP clade</taxon>
        <taxon>Oryzoideae</taxon>
        <taxon>Oryzeae</taxon>
        <taxon>Oryzinae</taxon>
        <taxon>Oryza</taxon>
        <taxon>Oryza sativa</taxon>
    </lineage>
</organism>
<protein>
    <recommendedName>
        <fullName>Small ubiquitin-related modifier 1</fullName>
        <shortName>OsSUMO1</shortName>
    </recommendedName>
    <alternativeName>
        <fullName>Ubiquitin-like protein SMT3</fullName>
    </alternativeName>
</protein>
<gene>
    <name type="primary">SUMO1</name>
    <name type="synonym">SMT3</name>
    <name type="synonym">SUM1</name>
    <name type="ordered locus">Os01g0918300</name>
    <name type="ordered locus">LOC_Os01g68950</name>
    <name type="ORF">OsJ_04555</name>
    <name type="ORF">P0413C03.34-1</name>
    <name type="ORF">P0678F11.1-1</name>
</gene>
<evidence type="ECO:0000250" key="1"/>
<evidence type="ECO:0000255" key="2">
    <source>
        <dbReference type="PROSITE-ProRule" id="PRU00214"/>
    </source>
</evidence>
<evidence type="ECO:0000256" key="3">
    <source>
        <dbReference type="SAM" id="MobiDB-lite"/>
    </source>
</evidence>
<evidence type="ECO:0000305" key="4"/>
<sequence length="100" mass="10928">MSAAGEEDKKPAGGEGGGAHINLKVKGQDGNEVFFRIKRSTQLKKLMNAYCDRQSVDMNAIAFLFDGRRLRGEQTPDELEMEDGDEIDAMLHQTGGCLPA</sequence>
<reference key="1">
    <citation type="journal article" date="1997" name="Genomics">
        <title>SMT3A, a human homologue of the S. cerevisiae SMT3 gene, maps to chromosome 21qter and defines a novel gene family.</title>
        <authorList>
            <person name="Lapenta V."/>
            <person name="Chiurazzi P."/>
            <person name="van der Spek P.J."/>
            <person name="Pizzuti A."/>
            <person name="Hanaoka F."/>
            <person name="Brahe C."/>
        </authorList>
    </citation>
    <scope>NUCLEOTIDE SEQUENCE [MRNA]</scope>
</reference>
<reference key="2">
    <citation type="submission" date="1998-07" db="EMBL/GenBank/DDBJ databases">
        <title>Molecular analysis of rice SUMO-1 related genes.</title>
        <authorList>
            <person name="Kawagishi-Kobayashi M."/>
        </authorList>
    </citation>
    <scope>NUCLEOTIDE SEQUENCE [MRNA]</scope>
    <source>
        <strain>cv. Nipponbare</strain>
    </source>
</reference>
<reference key="3">
    <citation type="journal article" date="2002" name="Nature">
        <title>The genome sequence and structure of rice chromosome 1.</title>
        <authorList>
            <person name="Sasaki T."/>
            <person name="Matsumoto T."/>
            <person name="Yamamoto K."/>
            <person name="Sakata K."/>
            <person name="Baba T."/>
            <person name="Katayose Y."/>
            <person name="Wu J."/>
            <person name="Niimura Y."/>
            <person name="Cheng Z."/>
            <person name="Nagamura Y."/>
            <person name="Antonio B.A."/>
            <person name="Kanamori H."/>
            <person name="Hosokawa S."/>
            <person name="Masukawa M."/>
            <person name="Arikawa K."/>
            <person name="Chiden Y."/>
            <person name="Hayashi M."/>
            <person name="Okamoto M."/>
            <person name="Ando T."/>
            <person name="Aoki H."/>
            <person name="Arita K."/>
            <person name="Hamada M."/>
            <person name="Harada C."/>
            <person name="Hijishita S."/>
            <person name="Honda M."/>
            <person name="Ichikawa Y."/>
            <person name="Idonuma A."/>
            <person name="Iijima M."/>
            <person name="Ikeda M."/>
            <person name="Ikeno M."/>
            <person name="Ito S."/>
            <person name="Ito T."/>
            <person name="Ito Y."/>
            <person name="Ito Y."/>
            <person name="Iwabuchi A."/>
            <person name="Kamiya K."/>
            <person name="Karasawa W."/>
            <person name="Katagiri S."/>
            <person name="Kikuta A."/>
            <person name="Kobayashi N."/>
            <person name="Kono I."/>
            <person name="Machita K."/>
            <person name="Maehara T."/>
            <person name="Mizuno H."/>
            <person name="Mizubayashi T."/>
            <person name="Mukai Y."/>
            <person name="Nagasaki H."/>
            <person name="Nakashima M."/>
            <person name="Nakama Y."/>
            <person name="Nakamichi Y."/>
            <person name="Nakamura M."/>
            <person name="Namiki N."/>
            <person name="Negishi M."/>
            <person name="Ohta I."/>
            <person name="Ono N."/>
            <person name="Saji S."/>
            <person name="Sakai K."/>
            <person name="Shibata M."/>
            <person name="Shimokawa T."/>
            <person name="Shomura A."/>
            <person name="Song J."/>
            <person name="Takazaki Y."/>
            <person name="Terasawa K."/>
            <person name="Tsuji K."/>
            <person name="Waki K."/>
            <person name="Yamagata H."/>
            <person name="Yamane H."/>
            <person name="Yoshiki S."/>
            <person name="Yoshihara R."/>
            <person name="Yukawa K."/>
            <person name="Zhong H."/>
            <person name="Iwama H."/>
            <person name="Endo T."/>
            <person name="Ito H."/>
            <person name="Hahn J.H."/>
            <person name="Kim H.-I."/>
            <person name="Eun M.-Y."/>
            <person name="Yano M."/>
            <person name="Jiang J."/>
            <person name="Gojobori T."/>
        </authorList>
    </citation>
    <scope>NUCLEOTIDE SEQUENCE [LARGE SCALE GENOMIC DNA]</scope>
    <source>
        <strain>cv. Nipponbare</strain>
    </source>
</reference>
<reference key="4">
    <citation type="journal article" date="2005" name="Nature">
        <title>The map-based sequence of the rice genome.</title>
        <authorList>
            <consortium name="International rice genome sequencing project (IRGSP)"/>
        </authorList>
    </citation>
    <scope>NUCLEOTIDE SEQUENCE [LARGE SCALE GENOMIC DNA]</scope>
    <source>
        <strain>cv. Nipponbare</strain>
    </source>
</reference>
<reference key="5">
    <citation type="journal article" date="2008" name="Nucleic Acids Res.">
        <title>The rice annotation project database (RAP-DB): 2008 update.</title>
        <authorList>
            <consortium name="The rice annotation project (RAP)"/>
        </authorList>
    </citation>
    <scope>GENOME REANNOTATION</scope>
    <source>
        <strain>cv. Nipponbare</strain>
    </source>
</reference>
<reference key="6">
    <citation type="journal article" date="2013" name="Rice">
        <title>Improvement of the Oryza sativa Nipponbare reference genome using next generation sequence and optical map data.</title>
        <authorList>
            <person name="Kawahara Y."/>
            <person name="de la Bastide M."/>
            <person name="Hamilton J.P."/>
            <person name="Kanamori H."/>
            <person name="McCombie W.R."/>
            <person name="Ouyang S."/>
            <person name="Schwartz D.C."/>
            <person name="Tanaka T."/>
            <person name="Wu J."/>
            <person name="Zhou S."/>
            <person name="Childs K.L."/>
            <person name="Davidson R.M."/>
            <person name="Lin H."/>
            <person name="Quesada-Ocampo L."/>
            <person name="Vaillancourt B."/>
            <person name="Sakai H."/>
            <person name="Lee S.S."/>
            <person name="Kim J."/>
            <person name="Numa H."/>
            <person name="Itoh T."/>
            <person name="Buell C.R."/>
            <person name="Matsumoto T."/>
        </authorList>
    </citation>
    <scope>GENOME REANNOTATION</scope>
    <source>
        <strain>cv. Nipponbare</strain>
    </source>
</reference>
<reference key="7">
    <citation type="journal article" date="2005" name="PLoS Biol.">
        <title>The genomes of Oryza sativa: a history of duplications.</title>
        <authorList>
            <person name="Yu J."/>
            <person name="Wang J."/>
            <person name="Lin W."/>
            <person name="Li S."/>
            <person name="Li H."/>
            <person name="Zhou J."/>
            <person name="Ni P."/>
            <person name="Dong W."/>
            <person name="Hu S."/>
            <person name="Zeng C."/>
            <person name="Zhang J."/>
            <person name="Zhang Y."/>
            <person name="Li R."/>
            <person name="Xu Z."/>
            <person name="Li S."/>
            <person name="Li X."/>
            <person name="Zheng H."/>
            <person name="Cong L."/>
            <person name="Lin L."/>
            <person name="Yin J."/>
            <person name="Geng J."/>
            <person name="Li G."/>
            <person name="Shi J."/>
            <person name="Liu J."/>
            <person name="Lv H."/>
            <person name="Li J."/>
            <person name="Wang J."/>
            <person name="Deng Y."/>
            <person name="Ran L."/>
            <person name="Shi X."/>
            <person name="Wang X."/>
            <person name="Wu Q."/>
            <person name="Li C."/>
            <person name="Ren X."/>
            <person name="Wang J."/>
            <person name="Wang X."/>
            <person name="Li D."/>
            <person name="Liu D."/>
            <person name="Zhang X."/>
            <person name="Ji Z."/>
            <person name="Zhao W."/>
            <person name="Sun Y."/>
            <person name="Zhang Z."/>
            <person name="Bao J."/>
            <person name="Han Y."/>
            <person name="Dong L."/>
            <person name="Ji J."/>
            <person name="Chen P."/>
            <person name="Wu S."/>
            <person name="Liu J."/>
            <person name="Xiao Y."/>
            <person name="Bu D."/>
            <person name="Tan J."/>
            <person name="Yang L."/>
            <person name="Ye C."/>
            <person name="Zhang J."/>
            <person name="Xu J."/>
            <person name="Zhou Y."/>
            <person name="Yu Y."/>
            <person name="Zhang B."/>
            <person name="Zhuang S."/>
            <person name="Wei H."/>
            <person name="Liu B."/>
            <person name="Lei M."/>
            <person name="Yu H."/>
            <person name="Li Y."/>
            <person name="Xu H."/>
            <person name="Wei S."/>
            <person name="He X."/>
            <person name="Fang L."/>
            <person name="Zhang Z."/>
            <person name="Zhang Y."/>
            <person name="Huang X."/>
            <person name="Su Z."/>
            <person name="Tong W."/>
            <person name="Li J."/>
            <person name="Tong Z."/>
            <person name="Li S."/>
            <person name="Ye J."/>
            <person name="Wang L."/>
            <person name="Fang L."/>
            <person name="Lei T."/>
            <person name="Chen C.-S."/>
            <person name="Chen H.-C."/>
            <person name="Xu Z."/>
            <person name="Li H."/>
            <person name="Huang H."/>
            <person name="Zhang F."/>
            <person name="Xu H."/>
            <person name="Li N."/>
            <person name="Zhao C."/>
            <person name="Li S."/>
            <person name="Dong L."/>
            <person name="Huang Y."/>
            <person name="Li L."/>
            <person name="Xi Y."/>
            <person name="Qi Q."/>
            <person name="Li W."/>
            <person name="Zhang B."/>
            <person name="Hu W."/>
            <person name="Zhang Y."/>
            <person name="Tian X."/>
            <person name="Jiao Y."/>
            <person name="Liang X."/>
            <person name="Jin J."/>
            <person name="Gao L."/>
            <person name="Zheng W."/>
            <person name="Hao B."/>
            <person name="Liu S.-M."/>
            <person name="Wang W."/>
            <person name="Yuan L."/>
            <person name="Cao M."/>
            <person name="McDermott J."/>
            <person name="Samudrala R."/>
            <person name="Wang J."/>
            <person name="Wong G.K.-S."/>
            <person name="Yang H."/>
        </authorList>
    </citation>
    <scope>NUCLEOTIDE SEQUENCE [LARGE SCALE GENOMIC DNA]</scope>
    <source>
        <strain>cv. Nipponbare</strain>
    </source>
</reference>
<reference key="8">
    <citation type="journal article" date="2003" name="Science">
        <title>Collection, mapping, and annotation of over 28,000 cDNA clones from japonica rice.</title>
        <authorList>
            <consortium name="The rice full-length cDNA consortium"/>
        </authorList>
    </citation>
    <scope>NUCLEOTIDE SEQUENCE [LARGE SCALE MRNA]</scope>
    <source>
        <strain>cv. Nipponbare</strain>
    </source>
</reference>
<dbReference type="EMBL" id="X99608">
    <property type="protein sequence ID" value="CAA67922.1"/>
    <property type="molecule type" value="mRNA"/>
</dbReference>
<dbReference type="EMBL" id="AB016030">
    <property type="protein sequence ID" value="BAB82439.1"/>
    <property type="molecule type" value="mRNA"/>
</dbReference>
<dbReference type="EMBL" id="AP003437">
    <property type="protein sequence ID" value="BAB86095.1"/>
    <property type="molecule type" value="Genomic_DNA"/>
</dbReference>
<dbReference type="EMBL" id="AP003451">
    <property type="protein sequence ID" value="BAD87743.1"/>
    <property type="molecule type" value="Genomic_DNA"/>
</dbReference>
<dbReference type="EMBL" id="AP008207">
    <property type="protein sequence ID" value="BAF07121.1"/>
    <property type="molecule type" value="Genomic_DNA"/>
</dbReference>
<dbReference type="EMBL" id="AP014957">
    <property type="protein sequence ID" value="BAS75907.1"/>
    <property type="molecule type" value="Genomic_DNA"/>
</dbReference>
<dbReference type="EMBL" id="CM000138">
    <property type="protein sequence ID" value="EAZ14631.1"/>
    <property type="molecule type" value="Genomic_DNA"/>
</dbReference>
<dbReference type="EMBL" id="AK058869">
    <property type="protein sequence ID" value="BAG86819.1"/>
    <property type="molecule type" value="mRNA"/>
</dbReference>
<dbReference type="PIR" id="T04102">
    <property type="entry name" value="T04102"/>
</dbReference>
<dbReference type="SMR" id="P55857"/>
<dbReference type="FunCoup" id="P55857">
    <property type="interactions" value="3177"/>
</dbReference>
<dbReference type="STRING" id="39947.P55857"/>
<dbReference type="PaxDb" id="39947-P55857"/>
<dbReference type="EnsemblPlants" id="Os01t0918300-01">
    <property type="protein sequence ID" value="Os01t0918300-01"/>
    <property type="gene ID" value="Os01g0918300"/>
</dbReference>
<dbReference type="Gramene" id="Os01t0918300-01">
    <property type="protein sequence ID" value="Os01t0918300-01"/>
    <property type="gene ID" value="Os01g0918300"/>
</dbReference>
<dbReference type="KEGG" id="dosa:Os01g0918300"/>
<dbReference type="eggNOG" id="KOG1769">
    <property type="taxonomic scope" value="Eukaryota"/>
</dbReference>
<dbReference type="HOGENOM" id="CLU_148322_4_0_1"/>
<dbReference type="InParanoid" id="P55857"/>
<dbReference type="OMA" id="MKIYCAR"/>
<dbReference type="Proteomes" id="UP000000763">
    <property type="component" value="Chromosome 1"/>
</dbReference>
<dbReference type="Proteomes" id="UP000007752">
    <property type="component" value="Chromosome 1"/>
</dbReference>
<dbReference type="Proteomes" id="UP000059680">
    <property type="component" value="Chromosome 1"/>
</dbReference>
<dbReference type="ExpressionAtlas" id="P55857">
    <property type="expression patterns" value="baseline and differential"/>
</dbReference>
<dbReference type="GO" id="GO:0005737">
    <property type="term" value="C:cytoplasm"/>
    <property type="evidence" value="ECO:0007669"/>
    <property type="project" value="UniProtKB-SubCell"/>
</dbReference>
<dbReference type="GO" id="GO:0005634">
    <property type="term" value="C:nucleus"/>
    <property type="evidence" value="ECO:0000318"/>
    <property type="project" value="GO_Central"/>
</dbReference>
<dbReference type="GO" id="GO:0031386">
    <property type="term" value="F:protein tag activity"/>
    <property type="evidence" value="ECO:0000318"/>
    <property type="project" value="GO_Central"/>
</dbReference>
<dbReference type="GO" id="GO:0044389">
    <property type="term" value="F:ubiquitin-like protein ligase binding"/>
    <property type="evidence" value="ECO:0000318"/>
    <property type="project" value="GO_Central"/>
</dbReference>
<dbReference type="GO" id="GO:0016925">
    <property type="term" value="P:protein sumoylation"/>
    <property type="evidence" value="ECO:0000318"/>
    <property type="project" value="GO_Central"/>
</dbReference>
<dbReference type="CDD" id="cd16116">
    <property type="entry name" value="Ubl_Smt3_like"/>
    <property type="match status" value="1"/>
</dbReference>
<dbReference type="FunFam" id="3.10.20.90:FF:000171">
    <property type="entry name" value="Small ubiquitin-related modifier"/>
    <property type="match status" value="1"/>
</dbReference>
<dbReference type="Gene3D" id="3.10.20.90">
    <property type="entry name" value="Phosphatidylinositol 3-kinase Catalytic Subunit, Chain A, domain 1"/>
    <property type="match status" value="1"/>
</dbReference>
<dbReference type="InterPro" id="IPR022617">
    <property type="entry name" value="Rad60/SUMO-like_dom"/>
</dbReference>
<dbReference type="InterPro" id="IPR000626">
    <property type="entry name" value="Ubiquitin-like_dom"/>
</dbReference>
<dbReference type="InterPro" id="IPR029071">
    <property type="entry name" value="Ubiquitin-like_domsf"/>
</dbReference>
<dbReference type="PANTHER" id="PTHR10562">
    <property type="entry name" value="SMALL UBIQUITIN-RELATED MODIFIER"/>
    <property type="match status" value="1"/>
</dbReference>
<dbReference type="Pfam" id="PF11976">
    <property type="entry name" value="Rad60-SLD"/>
    <property type="match status" value="1"/>
</dbReference>
<dbReference type="SMART" id="SM00213">
    <property type="entry name" value="UBQ"/>
    <property type="match status" value="1"/>
</dbReference>
<dbReference type="SUPFAM" id="SSF54236">
    <property type="entry name" value="Ubiquitin-like"/>
    <property type="match status" value="1"/>
</dbReference>
<dbReference type="PROSITE" id="PS50053">
    <property type="entry name" value="UBIQUITIN_2"/>
    <property type="match status" value="1"/>
</dbReference>
<keyword id="KW-0963">Cytoplasm</keyword>
<keyword id="KW-1017">Isopeptide bond</keyword>
<keyword id="KW-0539">Nucleus</keyword>
<keyword id="KW-1185">Reference proteome</keyword>
<keyword id="KW-0833">Ubl conjugation pathway</keyword>
<name>SUMO1_ORYSJ</name>
<feature type="chain" id="PRO_0000114892" description="Small ubiquitin-related modifier 1">
    <location>
        <begin position="1"/>
        <end position="100"/>
    </location>
</feature>
<feature type="domain" description="Ubiquitin-like" evidence="2">
    <location>
        <begin position="19"/>
        <end position="96"/>
    </location>
</feature>
<feature type="region of interest" description="Disordered" evidence="3">
    <location>
        <begin position="1"/>
        <end position="23"/>
    </location>
</feature>
<feature type="compositionally biased region" description="Basic and acidic residues" evidence="3">
    <location>
        <begin position="1"/>
        <end position="12"/>
    </location>
</feature>
<feature type="cross-link" description="Glycyl lysine isopeptide (Gly-Lys) (interchain with K-? in acceptor proteins)">
    <location>
        <position position="96"/>
    </location>
</feature>
<accession>P55857</accession>
<accession>A0A0P0VC69</accession>
<accession>Q0JGK7</accession>
<accession>Q7F2W9</accession>